<feature type="chain" id="PRO_1000045410" description="Probable 5-dehydro-4-deoxyglucarate dehydratase">
    <location>
        <begin position="1"/>
        <end position="303"/>
    </location>
</feature>
<proteinExistence type="inferred from homology"/>
<accession>Q3KI36</accession>
<dbReference type="EC" id="4.2.1.41" evidence="1"/>
<dbReference type="EMBL" id="CP000094">
    <property type="protein sequence ID" value="ABA72570.1"/>
    <property type="molecule type" value="Genomic_DNA"/>
</dbReference>
<dbReference type="SMR" id="Q3KI36"/>
<dbReference type="KEGG" id="pfo:Pfl01_0827"/>
<dbReference type="eggNOG" id="COG0329">
    <property type="taxonomic scope" value="Bacteria"/>
</dbReference>
<dbReference type="HOGENOM" id="CLU_049343_5_2_6"/>
<dbReference type="UniPathway" id="UPA00564">
    <property type="reaction ID" value="UER00628"/>
</dbReference>
<dbReference type="Proteomes" id="UP000002704">
    <property type="component" value="Chromosome"/>
</dbReference>
<dbReference type="GO" id="GO:0008840">
    <property type="term" value="F:4-hydroxy-tetrahydrodipicolinate synthase activity"/>
    <property type="evidence" value="ECO:0007669"/>
    <property type="project" value="TreeGrafter"/>
</dbReference>
<dbReference type="GO" id="GO:0047448">
    <property type="term" value="F:5-dehydro-4-deoxyglucarate dehydratase activity"/>
    <property type="evidence" value="ECO:0007669"/>
    <property type="project" value="UniProtKB-UniRule"/>
</dbReference>
<dbReference type="GO" id="GO:0042838">
    <property type="term" value="P:D-glucarate catabolic process"/>
    <property type="evidence" value="ECO:0007669"/>
    <property type="project" value="UniProtKB-UniRule"/>
</dbReference>
<dbReference type="CDD" id="cd00951">
    <property type="entry name" value="KDGDH"/>
    <property type="match status" value="1"/>
</dbReference>
<dbReference type="Gene3D" id="3.20.20.70">
    <property type="entry name" value="Aldolase class I"/>
    <property type="match status" value="1"/>
</dbReference>
<dbReference type="HAMAP" id="MF_00694">
    <property type="entry name" value="KDGDH"/>
    <property type="match status" value="1"/>
</dbReference>
<dbReference type="InterPro" id="IPR013785">
    <property type="entry name" value="Aldolase_TIM"/>
</dbReference>
<dbReference type="InterPro" id="IPR002220">
    <property type="entry name" value="DapA-like"/>
</dbReference>
<dbReference type="InterPro" id="IPR017655">
    <property type="entry name" value="Dehydro-deoxyglucarate_dehyd"/>
</dbReference>
<dbReference type="NCBIfam" id="TIGR03249">
    <property type="entry name" value="KdgD"/>
    <property type="match status" value="1"/>
</dbReference>
<dbReference type="NCBIfam" id="NF002958">
    <property type="entry name" value="PRK03620.1"/>
    <property type="match status" value="1"/>
</dbReference>
<dbReference type="PANTHER" id="PTHR12128:SF19">
    <property type="entry name" value="5-DEHYDRO-4-DEOXYGLUCARATE DEHYDRATASE 2-RELATED"/>
    <property type="match status" value="1"/>
</dbReference>
<dbReference type="PANTHER" id="PTHR12128">
    <property type="entry name" value="DIHYDRODIPICOLINATE SYNTHASE"/>
    <property type="match status" value="1"/>
</dbReference>
<dbReference type="Pfam" id="PF00701">
    <property type="entry name" value="DHDPS"/>
    <property type="match status" value="1"/>
</dbReference>
<dbReference type="PIRSF" id="PIRSF001365">
    <property type="entry name" value="DHDPS"/>
    <property type="match status" value="1"/>
</dbReference>
<dbReference type="SMART" id="SM01130">
    <property type="entry name" value="DHDPS"/>
    <property type="match status" value="1"/>
</dbReference>
<dbReference type="SUPFAM" id="SSF51569">
    <property type="entry name" value="Aldolase"/>
    <property type="match status" value="1"/>
</dbReference>
<sequence length="303" mass="32556">MNPQELKSILSAGLLSFPVTDFNAQGDFNRAGYIKRLEWLAPYGASALFAAGGTGEFFSLAASEYSEIIKTAVDTCASSVPILAGVGGSTRQAIEYAQEAERLGAKGLLLLPHYLTEASQDGVAAHVEAVCKSVNIGVVVYNRNVCRLTAPLLERLAERCPNLIGYKDGLGDIELMVSIRRRLGDRFSYLGGLPTAEVYAAAYKALGVPVYSSAVFNFIPKTAMDFYHAIAREDHATVGKIIDDFFLPYLDIRNRKAGYAVSIVKAGAKIAGYDAGPVRAPLTDLTGEEYEMLAALIDKQGAQ</sequence>
<reference key="1">
    <citation type="journal article" date="2009" name="Genome Biol.">
        <title>Genomic and genetic analyses of diversity and plant interactions of Pseudomonas fluorescens.</title>
        <authorList>
            <person name="Silby M.W."/>
            <person name="Cerdeno-Tarraga A.M."/>
            <person name="Vernikos G.S."/>
            <person name="Giddens S.R."/>
            <person name="Jackson R.W."/>
            <person name="Preston G.M."/>
            <person name="Zhang X.-X."/>
            <person name="Moon C.D."/>
            <person name="Gehrig S.M."/>
            <person name="Godfrey S.A.C."/>
            <person name="Knight C.G."/>
            <person name="Malone J.G."/>
            <person name="Robinson Z."/>
            <person name="Spiers A.J."/>
            <person name="Harris S."/>
            <person name="Challis G.L."/>
            <person name="Yaxley A.M."/>
            <person name="Harris D."/>
            <person name="Seeger K."/>
            <person name="Murphy L."/>
            <person name="Rutter S."/>
            <person name="Squares R."/>
            <person name="Quail M.A."/>
            <person name="Saunders E."/>
            <person name="Mavromatis K."/>
            <person name="Brettin T.S."/>
            <person name="Bentley S.D."/>
            <person name="Hothersall J."/>
            <person name="Stephens E."/>
            <person name="Thomas C.M."/>
            <person name="Parkhill J."/>
            <person name="Levy S.B."/>
            <person name="Rainey P.B."/>
            <person name="Thomson N.R."/>
        </authorList>
    </citation>
    <scope>NUCLEOTIDE SEQUENCE [LARGE SCALE GENOMIC DNA]</scope>
    <source>
        <strain>Pf0-1</strain>
    </source>
</reference>
<name>KDGD_PSEPF</name>
<comment type="catalytic activity">
    <reaction evidence="1">
        <text>5-dehydro-4-deoxy-D-glucarate + H(+) = 2,5-dioxopentanoate + CO2 + H2O</text>
        <dbReference type="Rhea" id="RHEA:24608"/>
        <dbReference type="ChEBI" id="CHEBI:15377"/>
        <dbReference type="ChEBI" id="CHEBI:15378"/>
        <dbReference type="ChEBI" id="CHEBI:16526"/>
        <dbReference type="ChEBI" id="CHEBI:42819"/>
        <dbReference type="ChEBI" id="CHEBI:58136"/>
        <dbReference type="EC" id="4.2.1.41"/>
    </reaction>
</comment>
<comment type="pathway">
    <text evidence="1">Carbohydrate acid metabolism; D-glucarate degradation; 2,5-dioxopentanoate from D-glucarate: step 2/2.</text>
</comment>
<comment type="similarity">
    <text evidence="1">Belongs to the DapA family.</text>
</comment>
<evidence type="ECO:0000255" key="1">
    <source>
        <dbReference type="HAMAP-Rule" id="MF_00694"/>
    </source>
</evidence>
<keyword id="KW-0456">Lyase</keyword>
<protein>
    <recommendedName>
        <fullName evidence="1">Probable 5-dehydro-4-deoxyglucarate dehydratase</fullName>
        <ecNumber evidence="1">4.2.1.41</ecNumber>
    </recommendedName>
    <alternativeName>
        <fullName evidence="1">5-keto-4-deoxy-glucarate dehydratase</fullName>
        <shortName evidence="1">KDGDH</shortName>
    </alternativeName>
</protein>
<gene>
    <name type="ordered locus">Pfl01_0827</name>
</gene>
<organism>
    <name type="scientific">Pseudomonas fluorescens (strain Pf0-1)</name>
    <dbReference type="NCBI Taxonomy" id="205922"/>
    <lineage>
        <taxon>Bacteria</taxon>
        <taxon>Pseudomonadati</taxon>
        <taxon>Pseudomonadota</taxon>
        <taxon>Gammaproteobacteria</taxon>
        <taxon>Pseudomonadales</taxon>
        <taxon>Pseudomonadaceae</taxon>
        <taxon>Pseudomonas</taxon>
    </lineage>
</organism>